<comment type="function">
    <text evidence="1">Succinyl-CoA synthetase functions in the citric acid cycle (TCA), coupling the hydrolysis of succinyl-CoA to the synthesis of either ATP or GTP and thus represents the only step of substrate-level phosphorylation in the TCA. The beta subunit provides nucleotide specificity of the enzyme and binds the substrate succinate, while the binding sites for coenzyme A and phosphate are found in the alpha subunit.</text>
</comment>
<comment type="catalytic activity">
    <reaction evidence="1">
        <text>succinate + ATP + CoA = succinyl-CoA + ADP + phosphate</text>
        <dbReference type="Rhea" id="RHEA:17661"/>
        <dbReference type="ChEBI" id="CHEBI:30031"/>
        <dbReference type="ChEBI" id="CHEBI:30616"/>
        <dbReference type="ChEBI" id="CHEBI:43474"/>
        <dbReference type="ChEBI" id="CHEBI:57287"/>
        <dbReference type="ChEBI" id="CHEBI:57292"/>
        <dbReference type="ChEBI" id="CHEBI:456216"/>
        <dbReference type="EC" id="6.2.1.5"/>
    </reaction>
    <physiologicalReaction direction="right-to-left" evidence="1">
        <dbReference type="Rhea" id="RHEA:17663"/>
    </physiologicalReaction>
</comment>
<comment type="catalytic activity">
    <reaction evidence="1">
        <text>GTP + succinate + CoA = succinyl-CoA + GDP + phosphate</text>
        <dbReference type="Rhea" id="RHEA:22120"/>
        <dbReference type="ChEBI" id="CHEBI:30031"/>
        <dbReference type="ChEBI" id="CHEBI:37565"/>
        <dbReference type="ChEBI" id="CHEBI:43474"/>
        <dbReference type="ChEBI" id="CHEBI:57287"/>
        <dbReference type="ChEBI" id="CHEBI:57292"/>
        <dbReference type="ChEBI" id="CHEBI:58189"/>
    </reaction>
    <physiologicalReaction direction="right-to-left" evidence="1">
        <dbReference type="Rhea" id="RHEA:22122"/>
    </physiologicalReaction>
</comment>
<comment type="cofactor">
    <cofactor evidence="1">
        <name>Mg(2+)</name>
        <dbReference type="ChEBI" id="CHEBI:18420"/>
    </cofactor>
    <text evidence="1">Binds 1 Mg(2+) ion per subunit.</text>
</comment>
<comment type="pathway">
    <text evidence="1">Carbohydrate metabolism; tricarboxylic acid cycle; succinate from succinyl-CoA (ligase route): step 1/1.</text>
</comment>
<comment type="subunit">
    <text evidence="1">Heterotetramer of two alpha and two beta subunits.</text>
</comment>
<comment type="similarity">
    <text evidence="1">Belongs to the succinate/malate CoA ligase beta subunit family.</text>
</comment>
<name>SUCC_GEOTN</name>
<dbReference type="EC" id="6.2.1.5" evidence="1"/>
<dbReference type="EMBL" id="CP000557">
    <property type="protein sequence ID" value="ABO66437.1"/>
    <property type="molecule type" value="Genomic_DNA"/>
</dbReference>
<dbReference type="RefSeq" id="WP_008878603.1">
    <property type="nucleotide sequence ID" value="NC_009328.1"/>
</dbReference>
<dbReference type="SMR" id="A4IM83"/>
<dbReference type="GeneID" id="87621346"/>
<dbReference type="KEGG" id="gtn:GTNG_1061"/>
<dbReference type="eggNOG" id="COG0045">
    <property type="taxonomic scope" value="Bacteria"/>
</dbReference>
<dbReference type="HOGENOM" id="CLU_037430_0_2_9"/>
<dbReference type="UniPathway" id="UPA00223">
    <property type="reaction ID" value="UER00999"/>
</dbReference>
<dbReference type="Proteomes" id="UP000001578">
    <property type="component" value="Chromosome"/>
</dbReference>
<dbReference type="GO" id="GO:0005829">
    <property type="term" value="C:cytosol"/>
    <property type="evidence" value="ECO:0007669"/>
    <property type="project" value="TreeGrafter"/>
</dbReference>
<dbReference type="GO" id="GO:0042709">
    <property type="term" value="C:succinate-CoA ligase complex"/>
    <property type="evidence" value="ECO:0007669"/>
    <property type="project" value="TreeGrafter"/>
</dbReference>
<dbReference type="GO" id="GO:0005524">
    <property type="term" value="F:ATP binding"/>
    <property type="evidence" value="ECO:0007669"/>
    <property type="project" value="UniProtKB-UniRule"/>
</dbReference>
<dbReference type="GO" id="GO:0000287">
    <property type="term" value="F:magnesium ion binding"/>
    <property type="evidence" value="ECO:0007669"/>
    <property type="project" value="UniProtKB-UniRule"/>
</dbReference>
<dbReference type="GO" id="GO:0004775">
    <property type="term" value="F:succinate-CoA ligase (ADP-forming) activity"/>
    <property type="evidence" value="ECO:0007669"/>
    <property type="project" value="UniProtKB-UniRule"/>
</dbReference>
<dbReference type="GO" id="GO:0004776">
    <property type="term" value="F:succinate-CoA ligase (GDP-forming) activity"/>
    <property type="evidence" value="ECO:0007669"/>
    <property type="project" value="RHEA"/>
</dbReference>
<dbReference type="GO" id="GO:0006104">
    <property type="term" value="P:succinyl-CoA metabolic process"/>
    <property type="evidence" value="ECO:0007669"/>
    <property type="project" value="TreeGrafter"/>
</dbReference>
<dbReference type="GO" id="GO:0006099">
    <property type="term" value="P:tricarboxylic acid cycle"/>
    <property type="evidence" value="ECO:0007669"/>
    <property type="project" value="UniProtKB-UniRule"/>
</dbReference>
<dbReference type="FunFam" id="3.30.1490.20:FF:000002">
    <property type="entry name" value="Succinate--CoA ligase [ADP-forming] subunit beta"/>
    <property type="match status" value="1"/>
</dbReference>
<dbReference type="FunFam" id="3.30.470.20:FF:000002">
    <property type="entry name" value="Succinate--CoA ligase [ADP-forming] subunit beta"/>
    <property type="match status" value="1"/>
</dbReference>
<dbReference type="FunFam" id="3.40.50.261:FF:000001">
    <property type="entry name" value="Succinate--CoA ligase [ADP-forming] subunit beta"/>
    <property type="match status" value="1"/>
</dbReference>
<dbReference type="Gene3D" id="3.30.1490.20">
    <property type="entry name" value="ATP-grasp fold, A domain"/>
    <property type="match status" value="1"/>
</dbReference>
<dbReference type="Gene3D" id="3.30.470.20">
    <property type="entry name" value="ATP-grasp fold, B domain"/>
    <property type="match status" value="1"/>
</dbReference>
<dbReference type="Gene3D" id="3.40.50.261">
    <property type="entry name" value="Succinyl-CoA synthetase domains"/>
    <property type="match status" value="1"/>
</dbReference>
<dbReference type="HAMAP" id="MF_00558">
    <property type="entry name" value="Succ_CoA_beta"/>
    <property type="match status" value="1"/>
</dbReference>
<dbReference type="InterPro" id="IPR011761">
    <property type="entry name" value="ATP-grasp"/>
</dbReference>
<dbReference type="InterPro" id="IPR013650">
    <property type="entry name" value="ATP-grasp_succ-CoA_synth-type"/>
</dbReference>
<dbReference type="InterPro" id="IPR013815">
    <property type="entry name" value="ATP_grasp_subdomain_1"/>
</dbReference>
<dbReference type="InterPro" id="IPR017866">
    <property type="entry name" value="Succ-CoA_synthase_bsu_CS"/>
</dbReference>
<dbReference type="InterPro" id="IPR005811">
    <property type="entry name" value="SUCC_ACL_C"/>
</dbReference>
<dbReference type="InterPro" id="IPR005809">
    <property type="entry name" value="Succ_CoA_ligase-like_bsu"/>
</dbReference>
<dbReference type="InterPro" id="IPR016102">
    <property type="entry name" value="Succinyl-CoA_synth-like"/>
</dbReference>
<dbReference type="NCBIfam" id="NF001913">
    <property type="entry name" value="PRK00696.1"/>
    <property type="match status" value="1"/>
</dbReference>
<dbReference type="NCBIfam" id="TIGR01016">
    <property type="entry name" value="sucCoAbeta"/>
    <property type="match status" value="1"/>
</dbReference>
<dbReference type="PANTHER" id="PTHR11815:SF10">
    <property type="entry name" value="SUCCINATE--COA LIGASE [GDP-FORMING] SUBUNIT BETA, MITOCHONDRIAL"/>
    <property type="match status" value="1"/>
</dbReference>
<dbReference type="PANTHER" id="PTHR11815">
    <property type="entry name" value="SUCCINYL-COA SYNTHETASE BETA CHAIN"/>
    <property type="match status" value="1"/>
</dbReference>
<dbReference type="Pfam" id="PF08442">
    <property type="entry name" value="ATP-grasp_2"/>
    <property type="match status" value="1"/>
</dbReference>
<dbReference type="Pfam" id="PF00549">
    <property type="entry name" value="Ligase_CoA"/>
    <property type="match status" value="1"/>
</dbReference>
<dbReference type="PIRSF" id="PIRSF001554">
    <property type="entry name" value="SucCS_beta"/>
    <property type="match status" value="1"/>
</dbReference>
<dbReference type="SUPFAM" id="SSF56059">
    <property type="entry name" value="Glutathione synthetase ATP-binding domain-like"/>
    <property type="match status" value="1"/>
</dbReference>
<dbReference type="SUPFAM" id="SSF52210">
    <property type="entry name" value="Succinyl-CoA synthetase domains"/>
    <property type="match status" value="1"/>
</dbReference>
<dbReference type="PROSITE" id="PS50975">
    <property type="entry name" value="ATP_GRASP"/>
    <property type="match status" value="1"/>
</dbReference>
<dbReference type="PROSITE" id="PS01217">
    <property type="entry name" value="SUCCINYL_COA_LIG_3"/>
    <property type="match status" value="1"/>
</dbReference>
<reference key="1">
    <citation type="journal article" date="2007" name="Proc. Natl. Acad. Sci. U.S.A.">
        <title>Genome and proteome of long-chain alkane degrading Geobacillus thermodenitrificans NG80-2 isolated from a deep-subsurface oil reservoir.</title>
        <authorList>
            <person name="Feng L."/>
            <person name="Wang W."/>
            <person name="Cheng J."/>
            <person name="Ren Y."/>
            <person name="Zhao G."/>
            <person name="Gao C."/>
            <person name="Tang Y."/>
            <person name="Liu X."/>
            <person name="Han W."/>
            <person name="Peng X."/>
            <person name="Liu R."/>
            <person name="Wang L."/>
        </authorList>
    </citation>
    <scope>NUCLEOTIDE SEQUENCE [LARGE SCALE GENOMIC DNA]</scope>
    <source>
        <strain>NG80-2</strain>
    </source>
</reference>
<feature type="chain" id="PRO_1000061114" description="Succinate--CoA ligase [ADP-forming] subunit beta">
    <location>
        <begin position="1"/>
        <end position="386"/>
    </location>
</feature>
<feature type="domain" description="ATP-grasp" evidence="1">
    <location>
        <begin position="9"/>
        <end position="244"/>
    </location>
</feature>
<feature type="binding site" evidence="1">
    <location>
        <position position="46"/>
    </location>
    <ligand>
        <name>ATP</name>
        <dbReference type="ChEBI" id="CHEBI:30616"/>
    </ligand>
</feature>
<feature type="binding site" evidence="1">
    <location>
        <begin position="53"/>
        <end position="55"/>
    </location>
    <ligand>
        <name>ATP</name>
        <dbReference type="ChEBI" id="CHEBI:30616"/>
    </ligand>
</feature>
<feature type="binding site" evidence="1">
    <location>
        <position position="99"/>
    </location>
    <ligand>
        <name>ATP</name>
        <dbReference type="ChEBI" id="CHEBI:30616"/>
    </ligand>
</feature>
<feature type="binding site" evidence="1">
    <location>
        <position position="102"/>
    </location>
    <ligand>
        <name>ATP</name>
        <dbReference type="ChEBI" id="CHEBI:30616"/>
    </ligand>
</feature>
<feature type="binding site" evidence="1">
    <location>
        <position position="107"/>
    </location>
    <ligand>
        <name>ATP</name>
        <dbReference type="ChEBI" id="CHEBI:30616"/>
    </ligand>
</feature>
<feature type="binding site" evidence="1">
    <location>
        <position position="199"/>
    </location>
    <ligand>
        <name>Mg(2+)</name>
        <dbReference type="ChEBI" id="CHEBI:18420"/>
    </ligand>
</feature>
<feature type="binding site" evidence="1">
    <location>
        <position position="213"/>
    </location>
    <ligand>
        <name>Mg(2+)</name>
        <dbReference type="ChEBI" id="CHEBI:18420"/>
    </ligand>
</feature>
<feature type="binding site" evidence="1">
    <location>
        <position position="264"/>
    </location>
    <ligand>
        <name>substrate</name>
        <note>ligand shared with subunit alpha</note>
    </ligand>
</feature>
<feature type="binding site" evidence="1">
    <location>
        <begin position="321"/>
        <end position="323"/>
    </location>
    <ligand>
        <name>substrate</name>
        <note>ligand shared with subunit alpha</note>
    </ligand>
</feature>
<accession>A4IM83</accession>
<gene>
    <name evidence="1" type="primary">sucC</name>
    <name type="ordered locus">GTNG_1061</name>
</gene>
<proteinExistence type="inferred from homology"/>
<keyword id="KW-0067">ATP-binding</keyword>
<keyword id="KW-0436">Ligase</keyword>
<keyword id="KW-0460">Magnesium</keyword>
<keyword id="KW-0479">Metal-binding</keyword>
<keyword id="KW-0547">Nucleotide-binding</keyword>
<keyword id="KW-0816">Tricarboxylic acid cycle</keyword>
<evidence type="ECO:0000255" key="1">
    <source>
        <dbReference type="HAMAP-Rule" id="MF_00558"/>
    </source>
</evidence>
<sequence>MNIHEYQAKEILRSYGVSVPNGRVAFTVDEAVEAAKALGTSVCVVKAQIHAGGRGKAGGVKVAKSLEEVRTYASELLGKVLVTHQTGPEGKEVKRLLIEEGCDIQKEYYIGLVVDRATSRVVLMGSEEGGTEIEEVAAKTPEKIFKEYVDPAVGLQAFQARRLAFNINIPKKLVNQAVKFMMGLYQVFVDKDCSIAEINPLVVTGDGKVMALDAKLNFDSNALYRHPDIMEYRDLDEEDPKEVEASKYDLNYIALDGNIGCMVNGAGLAMATMDIIKYYGGEPANFLDVGGGASEEKVTEAFKIILSDPNVKGIFVNIFGGIMKCDVIASGIVAATKQVGLTLPLVVRLEGTNVELGKKILQESGLNITAAESMADGAQKIVELVR</sequence>
<organism>
    <name type="scientific">Geobacillus thermodenitrificans (strain NG80-2)</name>
    <dbReference type="NCBI Taxonomy" id="420246"/>
    <lineage>
        <taxon>Bacteria</taxon>
        <taxon>Bacillati</taxon>
        <taxon>Bacillota</taxon>
        <taxon>Bacilli</taxon>
        <taxon>Bacillales</taxon>
        <taxon>Anoxybacillaceae</taxon>
        <taxon>Geobacillus</taxon>
    </lineage>
</organism>
<protein>
    <recommendedName>
        <fullName evidence="1">Succinate--CoA ligase [ADP-forming] subunit beta</fullName>
        <ecNumber evidence="1">6.2.1.5</ecNumber>
    </recommendedName>
    <alternativeName>
        <fullName evidence="1">Succinyl-CoA synthetase subunit beta</fullName>
        <shortName evidence="1">SCS-beta</shortName>
    </alternativeName>
</protein>